<reference key="1">
    <citation type="submission" date="2003-03" db="EMBL/GenBank/DDBJ databases">
        <title>African swine fever virus genomes.</title>
        <authorList>
            <person name="Kutish G.F."/>
            <person name="Rock D.L."/>
        </authorList>
    </citation>
    <scope>NUCLEOTIDE SEQUENCE [LARGE SCALE GENOMIC DNA]</scope>
</reference>
<proteinExistence type="inferred from homology"/>
<organism>
    <name type="scientific">African swine fever virus (isolate Pig/Kenya/KEN-50/1950)</name>
    <name type="common">ASFV</name>
    <dbReference type="NCBI Taxonomy" id="561445"/>
    <lineage>
        <taxon>Viruses</taxon>
        <taxon>Varidnaviria</taxon>
        <taxon>Bamfordvirae</taxon>
        <taxon>Nucleocytoviricota</taxon>
        <taxon>Pokkesviricetes</taxon>
        <taxon>Asfuvirales</taxon>
        <taxon>Asfarviridae</taxon>
        <taxon>Asfivirus</taxon>
        <taxon>African swine fever virus</taxon>
    </lineage>
</organism>
<sequence>MKVLILVLLGVVILQAAPIRKLEDLLPTRNPPQNELVYWCTYANQCDFCWECIHGICRNRIQADWPVIHQNDWIINCTVSRWNGICRYYEGPRGHIDHEMDCANPTYHTYPHIEYMKIYVRDDL</sequence>
<keyword id="KW-0325">Glycoprotein</keyword>
<keyword id="KW-0732">Signal</keyword>
<evidence type="ECO:0000250" key="1"/>
<evidence type="ECO:0000255" key="2"/>
<evidence type="ECO:0000305" key="3"/>
<dbReference type="EMBL" id="AY261360">
    <property type="status" value="NOT_ANNOTATED_CDS"/>
    <property type="molecule type" value="Genomic_DNA"/>
</dbReference>
<dbReference type="Proteomes" id="UP000000861">
    <property type="component" value="Segment"/>
</dbReference>
<dbReference type="InterPro" id="IPR004848">
    <property type="entry name" value="ASFV_fam_110"/>
</dbReference>
<dbReference type="Pfam" id="PF01639">
    <property type="entry name" value="v110"/>
    <property type="match status" value="1"/>
</dbReference>
<name>1108L_ASFK5</name>
<accession>P0C9I6</accession>
<organismHost>
    <name type="scientific">Ornithodoros</name>
    <name type="common">relapsing fever ticks</name>
    <dbReference type="NCBI Taxonomy" id="6937"/>
</organismHost>
<organismHost>
    <name type="scientific">Phacochoerus aethiopicus</name>
    <name type="common">Warthog</name>
    <dbReference type="NCBI Taxonomy" id="85517"/>
</organismHost>
<organismHost>
    <name type="scientific">Phacochoerus africanus</name>
    <name type="common">Warthog</name>
    <dbReference type="NCBI Taxonomy" id="41426"/>
</organismHost>
<organismHost>
    <name type="scientific">Potamochoerus larvatus</name>
    <name type="common">Bushpig</name>
    <dbReference type="NCBI Taxonomy" id="273792"/>
</organismHost>
<organismHost>
    <name type="scientific">Sus scrofa</name>
    <name type="common">Pig</name>
    <dbReference type="NCBI Taxonomy" id="9823"/>
</organismHost>
<protein>
    <recommendedName>
        <fullName>Protein MGF 110-8L</fullName>
    </recommendedName>
</protein>
<comment type="function">
    <text evidence="1">Plays a role in virus cell tropism, and may be required for efficient virus replication in macrophages.</text>
</comment>
<comment type="similarity">
    <text evidence="3">Belongs to the asfivirus MGF 110 family.</text>
</comment>
<feature type="signal peptide" evidence="2">
    <location>
        <begin position="1"/>
        <end position="16"/>
    </location>
</feature>
<feature type="chain" id="PRO_0000373208" description="Protein MGF 110-8L">
    <location>
        <begin position="17"/>
        <end position="124"/>
    </location>
</feature>
<feature type="glycosylation site" description="N-linked (GlcNAc...) asparagine; by host" evidence="2">
    <location>
        <position position="76"/>
    </location>
</feature>
<gene>
    <name type="ordered locus">Ken-017</name>
</gene>